<protein>
    <recommendedName>
        <fullName evidence="1">ATP-dependent Clp protease proteolytic subunit</fullName>
        <ecNumber evidence="1">3.4.21.92</ecNumber>
    </recommendedName>
    <alternativeName>
        <fullName evidence="1">Endopeptidase Clp</fullName>
    </alternativeName>
</protein>
<dbReference type="EC" id="3.4.21.92" evidence="1"/>
<dbReference type="EMBL" id="AY780259">
    <property type="protein sequence ID" value="AAX21052.1"/>
    <property type="molecule type" value="Genomic_DNA"/>
</dbReference>
<dbReference type="RefSeq" id="YP_636324.1">
    <property type="nucleotide sequence ID" value="NC_008115.1"/>
</dbReference>
<dbReference type="SMR" id="Q49KX3"/>
<dbReference type="MEROPS" id="S14.002"/>
<dbReference type="GeneID" id="4108408"/>
<dbReference type="GO" id="GO:0009570">
    <property type="term" value="C:chloroplast stroma"/>
    <property type="evidence" value="ECO:0007669"/>
    <property type="project" value="UniProtKB-SubCell"/>
</dbReference>
<dbReference type="GO" id="GO:0009368">
    <property type="term" value="C:endopeptidase Clp complex"/>
    <property type="evidence" value="ECO:0007669"/>
    <property type="project" value="TreeGrafter"/>
</dbReference>
<dbReference type="GO" id="GO:0004176">
    <property type="term" value="F:ATP-dependent peptidase activity"/>
    <property type="evidence" value="ECO:0007669"/>
    <property type="project" value="InterPro"/>
</dbReference>
<dbReference type="GO" id="GO:0051117">
    <property type="term" value="F:ATPase binding"/>
    <property type="evidence" value="ECO:0007669"/>
    <property type="project" value="TreeGrafter"/>
</dbReference>
<dbReference type="GO" id="GO:0004252">
    <property type="term" value="F:serine-type endopeptidase activity"/>
    <property type="evidence" value="ECO:0007669"/>
    <property type="project" value="UniProtKB-UniRule"/>
</dbReference>
<dbReference type="GO" id="GO:0006515">
    <property type="term" value="P:protein quality control for misfolded or incompletely synthesized proteins"/>
    <property type="evidence" value="ECO:0007669"/>
    <property type="project" value="TreeGrafter"/>
</dbReference>
<dbReference type="CDD" id="cd07017">
    <property type="entry name" value="S14_ClpP_2"/>
    <property type="match status" value="1"/>
</dbReference>
<dbReference type="FunFam" id="3.90.226.10:FF:000006">
    <property type="entry name" value="ATP-dependent Clp protease proteolytic subunit"/>
    <property type="match status" value="1"/>
</dbReference>
<dbReference type="Gene3D" id="3.90.226.10">
    <property type="entry name" value="2-enoyl-CoA Hydratase, Chain A, domain 1"/>
    <property type="match status" value="1"/>
</dbReference>
<dbReference type="HAMAP" id="MF_00444">
    <property type="entry name" value="ClpP"/>
    <property type="match status" value="1"/>
</dbReference>
<dbReference type="InterPro" id="IPR001907">
    <property type="entry name" value="ClpP"/>
</dbReference>
<dbReference type="InterPro" id="IPR029045">
    <property type="entry name" value="ClpP/crotonase-like_dom_sf"/>
</dbReference>
<dbReference type="InterPro" id="IPR023562">
    <property type="entry name" value="ClpP/TepA"/>
</dbReference>
<dbReference type="InterPro" id="IPR033135">
    <property type="entry name" value="ClpP_His_AS"/>
</dbReference>
<dbReference type="InterPro" id="IPR018215">
    <property type="entry name" value="ClpP_Ser_AS"/>
</dbReference>
<dbReference type="PANTHER" id="PTHR10381">
    <property type="entry name" value="ATP-DEPENDENT CLP PROTEASE PROTEOLYTIC SUBUNIT"/>
    <property type="match status" value="1"/>
</dbReference>
<dbReference type="PANTHER" id="PTHR10381:SF15">
    <property type="entry name" value="CHLOROPLASTIC ATP-DEPENDENT CLP PROTEASE PROTEOLYTIC SUBUNIT 1"/>
    <property type="match status" value="1"/>
</dbReference>
<dbReference type="Pfam" id="PF00574">
    <property type="entry name" value="CLP_protease"/>
    <property type="match status" value="1"/>
</dbReference>
<dbReference type="PRINTS" id="PR00127">
    <property type="entry name" value="CLPPROTEASEP"/>
</dbReference>
<dbReference type="SUPFAM" id="SSF52096">
    <property type="entry name" value="ClpP/crotonase"/>
    <property type="match status" value="1"/>
</dbReference>
<dbReference type="PROSITE" id="PS00382">
    <property type="entry name" value="CLP_PROTEASE_HIS"/>
    <property type="match status" value="1"/>
</dbReference>
<dbReference type="PROSITE" id="PS00381">
    <property type="entry name" value="CLP_PROTEASE_SER"/>
    <property type="match status" value="1"/>
</dbReference>
<comment type="function">
    <text evidence="1">Cleaves peptides in various proteins in a process that requires ATP hydrolysis. Has a chymotrypsin-like activity. Plays a major role in the degradation of misfolded proteins.</text>
</comment>
<comment type="catalytic activity">
    <reaction evidence="1">
        <text>Hydrolysis of proteins to small peptides in the presence of ATP and magnesium. alpha-casein is the usual test substrate. In the absence of ATP, only oligopeptides shorter than five residues are hydrolyzed (such as succinyl-Leu-Tyr-|-NHMec, and Leu-Tyr-Leu-|-Tyr-Trp, in which cleavage of the -Tyr-|-Leu- and -Tyr-|-Trp bonds also occurs).</text>
        <dbReference type="EC" id="3.4.21.92"/>
    </reaction>
</comment>
<comment type="subunit">
    <text>Component of the chloroplastic Clp protease core complex.</text>
</comment>
<comment type="subcellular location">
    <subcellularLocation>
        <location evidence="1">Plastid</location>
        <location evidence="1">Chloroplast stroma</location>
    </subcellularLocation>
</comment>
<comment type="similarity">
    <text evidence="1">Belongs to the peptidase S14 family.</text>
</comment>
<name>CLPP_EUCGG</name>
<reference key="1">
    <citation type="journal article" date="2005" name="DNA Res.">
        <title>Complete nucleotide sequence of the chloroplast genome from the Tasmanian blue gum, Eucalyptus globulus (Myrtaceae).</title>
        <authorList>
            <person name="Steane D.A."/>
        </authorList>
    </citation>
    <scope>NUCLEOTIDE SEQUENCE [LARGE SCALE GENOMIC DNA]</scope>
</reference>
<feature type="chain" id="PRO_0000275284" description="ATP-dependent Clp protease proteolytic subunit">
    <location>
        <begin position="1"/>
        <end position="196"/>
    </location>
</feature>
<feature type="active site" description="Nucleophile" evidence="1">
    <location>
        <position position="101"/>
    </location>
</feature>
<feature type="active site" evidence="1">
    <location>
        <position position="126"/>
    </location>
</feature>
<proteinExistence type="inferred from homology"/>
<evidence type="ECO:0000255" key="1">
    <source>
        <dbReference type="HAMAP-Rule" id="MF_00444"/>
    </source>
</evidence>
<geneLocation type="chloroplast"/>
<gene>
    <name evidence="1" type="primary">clpP</name>
</gene>
<keyword id="KW-0150">Chloroplast</keyword>
<keyword id="KW-0378">Hydrolase</keyword>
<keyword id="KW-0934">Plastid</keyword>
<keyword id="KW-0645">Protease</keyword>
<keyword id="KW-0720">Serine protease</keyword>
<sequence length="196" mass="22040">MPIGVPKVPFRSPGEEDASWVDVYNRLYRERLLFLGQEVDSEISNQLIGLMVYLSIENDNKDLYLFINSPGGWVIPGVAIYDTMQFVQPDVHTICMGLAASMGSFVLVGGEITKRLAFPHARVMIHQPASSFYEAQTGEFILEAEELLKLRETITRVYVQRTGKPLWVVSEDMERDVFMSATEAQAHGIVDLVAIE</sequence>
<accession>Q49KX3</accession>
<organism>
    <name type="scientific">Eucalyptus globulus subsp. globulus</name>
    <name type="common">Tasmanian blue gum</name>
    <dbReference type="NCBI Taxonomy" id="71271"/>
    <lineage>
        <taxon>Eukaryota</taxon>
        <taxon>Viridiplantae</taxon>
        <taxon>Streptophyta</taxon>
        <taxon>Embryophyta</taxon>
        <taxon>Tracheophyta</taxon>
        <taxon>Spermatophyta</taxon>
        <taxon>Magnoliopsida</taxon>
        <taxon>eudicotyledons</taxon>
        <taxon>Gunneridae</taxon>
        <taxon>Pentapetalae</taxon>
        <taxon>rosids</taxon>
        <taxon>malvids</taxon>
        <taxon>Myrtales</taxon>
        <taxon>Myrtaceae</taxon>
        <taxon>Myrtoideae</taxon>
        <taxon>Eucalypteae</taxon>
        <taxon>Eucalyptus</taxon>
    </lineage>
</organism>